<sequence>MSKAMALRRLMKEYKELTENGPDGITAGPSNEDDFFTWDCLIQGPDGTPFEGGLYPATLKFPSDYPLGPPTLKFECEFFHPNVYKDGTVCISILHAPGDDPNMYESSSERWSPVQSVEKILLSVMSMLAEPNDESGANIDACKMWREDREEYCRVVRRLARKTLGL</sequence>
<organism>
    <name type="scientific">Schizosaccharomyces pombe (strain 972 / ATCC 24843)</name>
    <name type="common">Fission yeast</name>
    <dbReference type="NCBI Taxonomy" id="284812"/>
    <lineage>
        <taxon>Eukaryota</taxon>
        <taxon>Fungi</taxon>
        <taxon>Dikarya</taxon>
        <taxon>Ascomycota</taxon>
        <taxon>Taphrinomycotina</taxon>
        <taxon>Schizosaccharomycetes</taxon>
        <taxon>Schizosaccharomycetales</taxon>
        <taxon>Schizosaccharomycetaceae</taxon>
        <taxon>Schizosaccharomyces</taxon>
    </lineage>
</organism>
<proteinExistence type="evidence at protein level"/>
<comment type="function">
    <text evidence="2 4 5">Catalyzes the covalent attachment of ubiquitin to other proteins. Functions in degradation of misfolded or regulated proteins localized in the endoplasmic reticulum (ER) lumen or membrane via the ubiquitin-proteasome system. Cognate E2 conjugating enzyme for the doa10 ubiquitin ligase complex, which is part of the ERAD-C pathway responsible for the rapid degradation of membrane proteins with misfolded cytoplasmic domains, and of the hrd1 ubiquitin ligase complex, which is part of the ERAD-L and ERAD-M pathways responsible for the rapid degradation of soluble lumenal and membrane proteins with misfolded lumenal domains (ERAD-L), or ER-membrane proteins with misfolded transmembrane domains (ERAD-M) (By similarity). Together with hrd1, required for the degradation of the transcription factor sre1 precursor in the absence of its binding partner scp1. Has a role in the formation of chromatin structures that influence the localization of transcriptional silencing factors.</text>
</comment>
<comment type="catalytic activity">
    <reaction evidence="2 3">
        <text>S-ubiquitinyl-[E1 ubiquitin-activating enzyme]-L-cysteine + [E2 ubiquitin-conjugating enzyme]-L-cysteine = [E1 ubiquitin-activating enzyme]-L-cysteine + S-ubiquitinyl-[E2 ubiquitin-conjugating enzyme]-L-cysteine.</text>
        <dbReference type="EC" id="2.3.2.23"/>
    </reaction>
</comment>
<comment type="pathway">
    <text evidence="2">Protein modification; protein ubiquitination.</text>
</comment>
<comment type="PTM">
    <text evidence="1">Autoubiquitinated at Cys-90; undergoes 'Lys-48'-linked polyubiquitination, which leads to proteasome-dependent protein degradation.</text>
</comment>
<comment type="similarity">
    <text evidence="2">Belongs to the ubiquitin-conjugating enzyme family.</text>
</comment>
<keyword id="KW-0002">3D-structure</keyword>
<keyword id="KW-0067">ATP-binding</keyword>
<keyword id="KW-0547">Nucleotide-binding</keyword>
<keyword id="KW-1185">Reference proteome</keyword>
<keyword id="KW-0882">Thioester bond</keyword>
<keyword id="KW-0808">Transferase</keyword>
<keyword id="KW-0832">Ubl conjugation</keyword>
<keyword id="KW-0833">Ubl conjugation pathway</keyword>
<protein>
    <recommendedName>
        <fullName>Ubiquitin-conjugating enzyme E2-18 kDa</fullName>
        <ecNumber>2.3.2.23</ecNumber>
    </recommendedName>
    <alternativeName>
        <fullName>E2 ubiquitin-conjugating enzyme 7</fullName>
    </alternativeName>
    <alternativeName>
        <fullName>Ubiquitin carrier protein</fullName>
    </alternativeName>
    <alternativeName>
        <fullName>Ubiquitin-protein ligase</fullName>
    </alternativeName>
</protein>
<evidence type="ECO:0000250" key="1">
    <source>
        <dbReference type="UniProtKB" id="Q02159"/>
    </source>
</evidence>
<evidence type="ECO:0000255" key="2">
    <source>
        <dbReference type="PROSITE-ProRule" id="PRU00388"/>
    </source>
</evidence>
<evidence type="ECO:0000255" key="3">
    <source>
        <dbReference type="PROSITE-ProRule" id="PRU10133"/>
    </source>
</evidence>
<evidence type="ECO:0000269" key="4">
    <source>
    </source>
</evidence>
<evidence type="ECO:0000269" key="5">
    <source>
    </source>
</evidence>
<evidence type="ECO:0000305" key="6"/>
<evidence type="ECO:0007829" key="7">
    <source>
        <dbReference type="PDB" id="6OP8"/>
    </source>
</evidence>
<feature type="chain" id="PRO_0000082553" description="Ubiquitin-conjugating enzyme E2-18 kDa">
    <location>
        <begin position="1"/>
        <end position="166"/>
    </location>
</feature>
<feature type="domain" description="UBC core" evidence="2">
    <location>
        <begin position="5"/>
        <end position="165"/>
    </location>
</feature>
<feature type="active site" description="Glycyl thioester intermediate" evidence="2 3">
    <location>
        <position position="90"/>
    </location>
</feature>
<feature type="cross-link" description="Glycyl cysteine thioester (Cys-Gly) (interchain with G-Cter in ubiquitin)" evidence="1">
    <location>
        <position position="90"/>
    </location>
</feature>
<feature type="sequence conflict" description="In Ref. 1; BAA20373." evidence="6" ref="1">
    <original>A</original>
    <variation>P</variation>
    <location>
        <position position="6"/>
    </location>
</feature>
<feature type="helix" evidence="7">
    <location>
        <begin position="5"/>
        <end position="20"/>
    </location>
</feature>
<feature type="strand" evidence="7">
    <location>
        <begin position="25"/>
        <end position="28"/>
    </location>
</feature>
<feature type="helix" evidence="7">
    <location>
        <begin position="32"/>
        <end position="34"/>
    </location>
</feature>
<feature type="strand" evidence="7">
    <location>
        <begin position="37"/>
        <end position="43"/>
    </location>
</feature>
<feature type="turn" evidence="7">
    <location>
        <begin position="49"/>
        <end position="52"/>
    </location>
</feature>
<feature type="strand" evidence="7">
    <location>
        <begin position="54"/>
        <end position="60"/>
    </location>
</feature>
<feature type="turn" evidence="7">
    <location>
        <begin position="63"/>
        <end position="66"/>
    </location>
</feature>
<feature type="strand" evidence="7">
    <location>
        <begin position="71"/>
        <end position="76"/>
    </location>
</feature>
<feature type="strand" evidence="7">
    <location>
        <begin position="87"/>
        <end position="89"/>
    </location>
</feature>
<feature type="helix" evidence="7">
    <location>
        <begin position="92"/>
        <end position="94"/>
    </location>
</feature>
<feature type="turn" evidence="7">
    <location>
        <begin position="101"/>
        <end position="103"/>
    </location>
</feature>
<feature type="helix" evidence="7">
    <location>
        <begin position="117"/>
        <end position="129"/>
    </location>
</feature>
<feature type="helix" evidence="7">
    <location>
        <begin position="139"/>
        <end position="147"/>
    </location>
</feature>
<feature type="helix" evidence="7">
    <location>
        <begin position="149"/>
        <end position="166"/>
    </location>
</feature>
<reference key="1">
    <citation type="journal article" date="1997" name="Mol. Cell. Biol.">
        <title>A ubiquitin-conjugating enzyme in fission yeast that is essential for the onset of anaphase in mitosis.</title>
        <authorList>
            <person name="Osaka F."/>
            <person name="Seino H."/>
            <person name="Seno T."/>
            <person name="Yamao F."/>
        </authorList>
    </citation>
    <scope>NUCLEOTIDE SEQUENCE [MRNA]</scope>
    <source>
        <strain>972 / ATCC 24843</strain>
    </source>
</reference>
<reference key="2">
    <citation type="journal article" date="2002" name="Nature">
        <title>The genome sequence of Schizosaccharomyces pombe.</title>
        <authorList>
            <person name="Wood V."/>
            <person name="Gwilliam R."/>
            <person name="Rajandream M.A."/>
            <person name="Lyne M.H."/>
            <person name="Lyne R."/>
            <person name="Stewart A."/>
            <person name="Sgouros J.G."/>
            <person name="Peat N."/>
            <person name="Hayles J."/>
            <person name="Baker S.G."/>
            <person name="Basham D."/>
            <person name="Bowman S."/>
            <person name="Brooks K."/>
            <person name="Brown D."/>
            <person name="Brown S."/>
            <person name="Chillingworth T."/>
            <person name="Churcher C.M."/>
            <person name="Collins M."/>
            <person name="Connor R."/>
            <person name="Cronin A."/>
            <person name="Davis P."/>
            <person name="Feltwell T."/>
            <person name="Fraser A."/>
            <person name="Gentles S."/>
            <person name="Goble A."/>
            <person name="Hamlin N."/>
            <person name="Harris D.E."/>
            <person name="Hidalgo J."/>
            <person name="Hodgson G."/>
            <person name="Holroyd S."/>
            <person name="Hornsby T."/>
            <person name="Howarth S."/>
            <person name="Huckle E.J."/>
            <person name="Hunt S."/>
            <person name="Jagels K."/>
            <person name="James K.D."/>
            <person name="Jones L."/>
            <person name="Jones M."/>
            <person name="Leather S."/>
            <person name="McDonald S."/>
            <person name="McLean J."/>
            <person name="Mooney P."/>
            <person name="Moule S."/>
            <person name="Mungall K.L."/>
            <person name="Murphy L.D."/>
            <person name="Niblett D."/>
            <person name="Odell C."/>
            <person name="Oliver K."/>
            <person name="O'Neil S."/>
            <person name="Pearson D."/>
            <person name="Quail M.A."/>
            <person name="Rabbinowitsch E."/>
            <person name="Rutherford K.M."/>
            <person name="Rutter S."/>
            <person name="Saunders D."/>
            <person name="Seeger K."/>
            <person name="Sharp S."/>
            <person name="Skelton J."/>
            <person name="Simmonds M.N."/>
            <person name="Squares R."/>
            <person name="Squares S."/>
            <person name="Stevens K."/>
            <person name="Taylor K."/>
            <person name="Taylor R.G."/>
            <person name="Tivey A."/>
            <person name="Walsh S.V."/>
            <person name="Warren T."/>
            <person name="Whitehead S."/>
            <person name="Woodward J.R."/>
            <person name="Volckaert G."/>
            <person name="Aert R."/>
            <person name="Robben J."/>
            <person name="Grymonprez B."/>
            <person name="Weltjens I."/>
            <person name="Vanstreels E."/>
            <person name="Rieger M."/>
            <person name="Schaefer M."/>
            <person name="Mueller-Auer S."/>
            <person name="Gabel C."/>
            <person name="Fuchs M."/>
            <person name="Duesterhoeft A."/>
            <person name="Fritzc C."/>
            <person name="Holzer E."/>
            <person name="Moestl D."/>
            <person name="Hilbert H."/>
            <person name="Borzym K."/>
            <person name="Langer I."/>
            <person name="Beck A."/>
            <person name="Lehrach H."/>
            <person name="Reinhardt R."/>
            <person name="Pohl T.M."/>
            <person name="Eger P."/>
            <person name="Zimmermann W."/>
            <person name="Wedler H."/>
            <person name="Wambutt R."/>
            <person name="Purnelle B."/>
            <person name="Goffeau A."/>
            <person name="Cadieu E."/>
            <person name="Dreano S."/>
            <person name="Gloux S."/>
            <person name="Lelaure V."/>
            <person name="Mottier S."/>
            <person name="Galibert F."/>
            <person name="Aves S.J."/>
            <person name="Xiang Z."/>
            <person name="Hunt C."/>
            <person name="Moore K."/>
            <person name="Hurst S.M."/>
            <person name="Lucas M."/>
            <person name="Rochet M."/>
            <person name="Gaillardin C."/>
            <person name="Tallada V.A."/>
            <person name="Garzon A."/>
            <person name="Thode G."/>
            <person name="Daga R.R."/>
            <person name="Cruzado L."/>
            <person name="Jimenez J."/>
            <person name="Sanchez M."/>
            <person name="del Rey F."/>
            <person name="Benito J."/>
            <person name="Dominguez A."/>
            <person name="Revuelta J.L."/>
            <person name="Moreno S."/>
            <person name="Armstrong J."/>
            <person name="Forsburg S.L."/>
            <person name="Cerutti L."/>
            <person name="Lowe T."/>
            <person name="McCombie W.R."/>
            <person name="Paulsen I."/>
            <person name="Potashkin J."/>
            <person name="Shpakovski G.V."/>
            <person name="Ussery D."/>
            <person name="Barrell B.G."/>
            <person name="Nurse P."/>
        </authorList>
    </citation>
    <scope>NUCLEOTIDE SEQUENCE [LARGE SCALE GENOMIC DNA]</scope>
    <source>
        <strain>972 / ATCC 24843</strain>
    </source>
</reference>
<reference key="3">
    <citation type="journal article" date="2002" name="Eukaryot. Cell">
        <title>The fission yeast ubiquitin-conjugating enzymes UbcP3, Ubc15, and Rhp6 affect transcriptional silencing of the mating-type region.</title>
        <authorList>
            <person name="Nielsen I.S."/>
            <person name="Nielsen O."/>
            <person name="Murray J.M."/>
            <person name="Thon G."/>
        </authorList>
    </citation>
    <scope>FUNCTION</scope>
</reference>
<reference key="4">
    <citation type="journal article" date="2009" name="J. Biol. Chem.">
        <title>Degradation of sterol regulatory element-binding protein precursor requires the endoplasmic reticulum-associated degradation components Ubc7 and Hrd1 in fission yeast.</title>
        <authorList>
            <person name="Hughes B.T."/>
            <person name="Nwosu C.C."/>
            <person name="Espenshade P.J."/>
        </authorList>
    </citation>
    <scope>FUNCTION</scope>
</reference>
<accession>O00102</accession>
<accession>Q9HDP3</accession>
<name>UBC7_SCHPO</name>
<dbReference type="EC" id="2.3.2.23"/>
<dbReference type="EMBL" id="D85544">
    <property type="protein sequence ID" value="BAA20373.1"/>
    <property type="molecule type" value="mRNA"/>
</dbReference>
<dbReference type="EMBL" id="CU329671">
    <property type="protein sequence ID" value="CAC08543.1"/>
    <property type="molecule type" value="Genomic_DNA"/>
</dbReference>
<dbReference type="PIR" id="T43235">
    <property type="entry name" value="T43235"/>
</dbReference>
<dbReference type="RefSeq" id="NP_595778.1">
    <property type="nucleotide sequence ID" value="NM_001021678.2"/>
</dbReference>
<dbReference type="PDB" id="6OP8">
    <property type="method" value="X-ray"/>
    <property type="resolution" value="1.70 A"/>
    <property type="chains" value="A=1-166"/>
</dbReference>
<dbReference type="PDBsum" id="6OP8"/>
<dbReference type="SMR" id="O00102"/>
<dbReference type="BioGRID" id="277766">
    <property type="interactions" value="2"/>
</dbReference>
<dbReference type="FunCoup" id="O00102">
    <property type="interactions" value="371"/>
</dbReference>
<dbReference type="STRING" id="284812.O00102"/>
<dbReference type="iPTMnet" id="O00102"/>
<dbReference type="PaxDb" id="4896-SPBP16F5.04.1"/>
<dbReference type="EnsemblFungi" id="SPBP16F5.04.1">
    <property type="protein sequence ID" value="SPBP16F5.04.1:pep"/>
    <property type="gene ID" value="SPBP16F5.04"/>
</dbReference>
<dbReference type="GeneID" id="2541252"/>
<dbReference type="KEGG" id="spo:2541252"/>
<dbReference type="PomBase" id="SPBP16F5.04">
    <property type="gene designation" value="ubc7"/>
</dbReference>
<dbReference type="VEuPathDB" id="FungiDB:SPBP16F5.04"/>
<dbReference type="eggNOG" id="KOG0426">
    <property type="taxonomic scope" value="Eukaryota"/>
</dbReference>
<dbReference type="HOGENOM" id="CLU_030988_10_1_1"/>
<dbReference type="InParanoid" id="O00102"/>
<dbReference type="OMA" id="APDGMFT"/>
<dbReference type="PhylomeDB" id="O00102"/>
<dbReference type="Reactome" id="R-SPO-8866652">
    <property type="pathway name" value="Synthesis of active ubiquitin: roles of E1 and E2 enzymes"/>
</dbReference>
<dbReference type="Reactome" id="R-SPO-983168">
    <property type="pathway name" value="Antigen processing: Ubiquitination &amp; Proteasome degradation"/>
</dbReference>
<dbReference type="UniPathway" id="UPA00143"/>
<dbReference type="PRO" id="PR:O00102"/>
<dbReference type="Proteomes" id="UP000002485">
    <property type="component" value="Chromosome II"/>
</dbReference>
<dbReference type="GO" id="GO:0005829">
    <property type="term" value="C:cytosol"/>
    <property type="evidence" value="ECO:0007005"/>
    <property type="project" value="PomBase"/>
</dbReference>
<dbReference type="GO" id="GO:0005783">
    <property type="term" value="C:endoplasmic reticulum"/>
    <property type="evidence" value="ECO:0000318"/>
    <property type="project" value="GO_Central"/>
</dbReference>
<dbReference type="GO" id="GO:0005634">
    <property type="term" value="C:nucleus"/>
    <property type="evidence" value="ECO:0007005"/>
    <property type="project" value="PomBase"/>
</dbReference>
<dbReference type="GO" id="GO:0000151">
    <property type="term" value="C:ubiquitin ligase complex"/>
    <property type="evidence" value="ECO:0000266"/>
    <property type="project" value="PomBase"/>
</dbReference>
<dbReference type="GO" id="GO:0005524">
    <property type="term" value="F:ATP binding"/>
    <property type="evidence" value="ECO:0007669"/>
    <property type="project" value="UniProtKB-KW"/>
</dbReference>
<dbReference type="GO" id="GO:0061631">
    <property type="term" value="F:ubiquitin conjugating enzyme activity"/>
    <property type="evidence" value="ECO:0000314"/>
    <property type="project" value="PomBase"/>
</dbReference>
<dbReference type="GO" id="GO:0036503">
    <property type="term" value="P:ERAD pathway"/>
    <property type="evidence" value="ECO:0000315"/>
    <property type="project" value="PomBase"/>
</dbReference>
<dbReference type="GO" id="GO:0180027">
    <property type="term" value="P:inner nuclear membrane-associated protein degradation pathway"/>
    <property type="evidence" value="ECO:0000315"/>
    <property type="project" value="PomBase"/>
</dbReference>
<dbReference type="GO" id="GO:0000209">
    <property type="term" value="P:protein polyubiquitination"/>
    <property type="evidence" value="ECO:0000318"/>
    <property type="project" value="GO_Central"/>
</dbReference>
<dbReference type="GO" id="GO:0006511">
    <property type="term" value="P:ubiquitin-dependent protein catabolic process"/>
    <property type="evidence" value="ECO:0000318"/>
    <property type="project" value="GO_Central"/>
</dbReference>
<dbReference type="CDD" id="cd23796">
    <property type="entry name" value="UBCc_UBE2G2"/>
    <property type="match status" value="1"/>
</dbReference>
<dbReference type="FunFam" id="3.10.110.10:FF:000008">
    <property type="entry name" value="Ubiquitin-conjugating enzyme E2 G2"/>
    <property type="match status" value="1"/>
</dbReference>
<dbReference type="Gene3D" id="3.10.110.10">
    <property type="entry name" value="Ubiquitin Conjugating Enzyme"/>
    <property type="match status" value="1"/>
</dbReference>
<dbReference type="InterPro" id="IPR050113">
    <property type="entry name" value="Ub_conjugating_enzyme"/>
</dbReference>
<dbReference type="InterPro" id="IPR000608">
    <property type="entry name" value="UBQ-conjugat_E2_core"/>
</dbReference>
<dbReference type="InterPro" id="IPR023313">
    <property type="entry name" value="UBQ-conjugating_AS"/>
</dbReference>
<dbReference type="InterPro" id="IPR016135">
    <property type="entry name" value="UBQ-conjugating_enzyme/RWD"/>
</dbReference>
<dbReference type="PANTHER" id="PTHR24067">
    <property type="entry name" value="UBIQUITIN-CONJUGATING ENZYME E2"/>
    <property type="match status" value="1"/>
</dbReference>
<dbReference type="Pfam" id="PF00179">
    <property type="entry name" value="UQ_con"/>
    <property type="match status" value="1"/>
</dbReference>
<dbReference type="SMART" id="SM00212">
    <property type="entry name" value="UBCc"/>
    <property type="match status" value="1"/>
</dbReference>
<dbReference type="SUPFAM" id="SSF54495">
    <property type="entry name" value="UBC-like"/>
    <property type="match status" value="1"/>
</dbReference>
<dbReference type="PROSITE" id="PS00183">
    <property type="entry name" value="UBC_1"/>
    <property type="match status" value="1"/>
</dbReference>
<dbReference type="PROSITE" id="PS50127">
    <property type="entry name" value="UBC_2"/>
    <property type="match status" value="1"/>
</dbReference>
<gene>
    <name type="primary">ubc7</name>
    <name type="synonym">ubcp3</name>
    <name type="ORF">SPBP16F5.04</name>
</gene>